<proteinExistence type="evidence at transcript level"/>
<name>MAEA_XENLA</name>
<comment type="function">
    <text evidence="2 3">Core component of the CTLH E3 ubiquitin-protein ligase complex that selectively accepts ubiquitin from UBE2H and mediates ubiquitination and subsequent proteasomal degradation of the transcription factor HBP1. MAEA and RMND5A are both required for catalytic activity of the CTLH E3 ubiquitin-protein ligase complex. MAEA is required for normal cell proliferation. The CTLH E3 ubiquitin-protein ligase complex is not required for the degradation of enzymes involved in gluconeogenesis, such as FBP1 (By similarity). Plays a role in erythroblast maturation and in the development of mature macrophages (By similarity). Mediates the attachment of erythroid cell to mature macrophages; this MAEA-mediated contact inhibits erythroid cell apoptosis (By similarity). Participates in erythroblastic island formation, which is the functional unit of definitive erythropoiesis. Associates with F-actin to regulate actin distribution in erythroblasts and macrophages (By similarity). May contribute to nuclear architecture and cells division events (By similarity).</text>
</comment>
<comment type="catalytic activity">
    <reaction evidence="3">
        <text>S-ubiquitinyl-[E2 ubiquitin-conjugating enzyme]-L-cysteine + [acceptor protein]-L-lysine = [E2 ubiquitin-conjugating enzyme]-L-cysteine + N(6)-ubiquitinyl-[acceptor protein]-L-lysine.</text>
        <dbReference type="EC" id="2.3.2.27"/>
    </reaction>
</comment>
<comment type="subunit">
    <text evidence="3">Identified in the CTLH complex that contains at least MAEA, RMND5A, GID8, WDR26, and RANBP9 and/or RANBP10 as the catalytic core. Interacts with F-actin.</text>
</comment>
<comment type="subcellular location">
    <subcellularLocation>
        <location evidence="2">Nucleus matrix</location>
    </subcellularLocation>
    <subcellularLocation>
        <location evidence="2">Cell membrane</location>
    </subcellularLocation>
    <subcellularLocation>
        <location evidence="2">Cytoplasm</location>
        <location evidence="2">Cytoskeleton</location>
    </subcellularLocation>
    <text evidence="2">Migration from nuclear matrix in immature macrophages to cell surface in mature ones.</text>
</comment>
<comment type="domain">
    <text evidence="3">The expected RING-type zinc finger domain is highly divergent and most of the expected Cys residues are not conserved. Still, the protein is required for CTLH complex E3 ubiquitin-protein transferase activity. In addition, the conserved Cys-314 in this highly divergent region is required for ubiquitination by the yeast GID complex, suggesting a direct role in catalyzing ubiquitination.</text>
</comment>
<comment type="sequence caution" evidence="7">
    <conflict type="erroneous initiation">
        <sequence resource="EMBL-CDS" id="AAH71124"/>
    </conflict>
</comment>
<evidence type="ECO:0000250" key="1">
    <source>
        <dbReference type="UniProtKB" id="P40492"/>
    </source>
</evidence>
<evidence type="ECO:0000250" key="2">
    <source>
        <dbReference type="UniProtKB" id="Q4VC33"/>
    </source>
</evidence>
<evidence type="ECO:0000250" key="3">
    <source>
        <dbReference type="UniProtKB" id="Q7L5Y9"/>
    </source>
</evidence>
<evidence type="ECO:0000255" key="4">
    <source>
        <dbReference type="PROSITE-ProRule" id="PRU00058"/>
    </source>
</evidence>
<evidence type="ECO:0000255" key="5">
    <source>
        <dbReference type="PROSITE-ProRule" id="PRU00126"/>
    </source>
</evidence>
<evidence type="ECO:0000255" key="6">
    <source>
        <dbReference type="PROSITE-ProRule" id="PRU01215"/>
    </source>
</evidence>
<evidence type="ECO:0000305" key="7"/>
<sequence>MAVQESAAQLSMALKVQEYPTLKVPYETLNKRFRAAQKNIDRETSHVTMVVAELEKTLSSCSAVDSVVSLLDGVVEKLSVLKRKAMESIQAEDESAKLCKRRIEHLKEHSSDQTAAINMWKKKRMDRMMVEHLLRCGYYNTAVKLARQSEIEDLVNIEMFLTAKEVEESLERQETMTCLAWCHDNKSRLRKMKSCLEFSLRIQEFIELIRQNKRLDAVRHARKHFSQAEGSQLDEVRQVMGMLAFPSDTHISPYKDLLDPARWRMLIQQFRYDNYRLHQLGNNSVFTITLQAGLSAIKTPQCYKEDGTSKNPDCPVCSKSLNKLAQPLPLAHCANSRLVCKISGDVMNENNPPMMLPNGYVYGYNSLLSIRQDDKVVCPRTKEVFNFSQAEKVYIM</sequence>
<protein>
    <recommendedName>
        <fullName>E3 ubiquitin-protein transferase MAEA</fullName>
        <ecNumber evidence="3">2.3.2.27</ecNumber>
    </recommendedName>
    <alternativeName>
        <fullName>Macrophage erythroblast attacher</fullName>
    </alternativeName>
</protein>
<organism>
    <name type="scientific">Xenopus laevis</name>
    <name type="common">African clawed frog</name>
    <dbReference type="NCBI Taxonomy" id="8355"/>
    <lineage>
        <taxon>Eukaryota</taxon>
        <taxon>Metazoa</taxon>
        <taxon>Chordata</taxon>
        <taxon>Craniata</taxon>
        <taxon>Vertebrata</taxon>
        <taxon>Euteleostomi</taxon>
        <taxon>Amphibia</taxon>
        <taxon>Batrachia</taxon>
        <taxon>Anura</taxon>
        <taxon>Pipoidea</taxon>
        <taxon>Pipidae</taxon>
        <taxon>Xenopodinae</taxon>
        <taxon>Xenopus</taxon>
        <taxon>Xenopus</taxon>
    </lineage>
</organism>
<accession>Q6GR10</accession>
<gene>
    <name type="primary">maea</name>
</gene>
<keyword id="KW-0009">Actin-binding</keyword>
<keyword id="KW-0131">Cell cycle</keyword>
<keyword id="KW-0132">Cell division</keyword>
<keyword id="KW-1003">Cell membrane</keyword>
<keyword id="KW-0963">Cytoplasm</keyword>
<keyword id="KW-0206">Cytoskeleton</keyword>
<keyword id="KW-0265">Erythrocyte maturation</keyword>
<keyword id="KW-0472">Membrane</keyword>
<keyword id="KW-0479">Metal-binding</keyword>
<keyword id="KW-0539">Nucleus</keyword>
<keyword id="KW-1185">Reference proteome</keyword>
<keyword id="KW-0808">Transferase</keyword>
<keyword id="KW-0833">Ubl conjugation pathway</keyword>
<keyword id="KW-0862">Zinc</keyword>
<keyword id="KW-0863">Zinc-finger</keyword>
<dbReference type="EC" id="2.3.2.27" evidence="3"/>
<dbReference type="EMBL" id="BC071124">
    <property type="protein sequence ID" value="AAH71124.1"/>
    <property type="status" value="ALT_INIT"/>
    <property type="molecule type" value="mRNA"/>
</dbReference>
<dbReference type="RefSeq" id="NP_001085357.2">
    <property type="nucleotide sequence ID" value="NM_001091888.1"/>
</dbReference>
<dbReference type="SMR" id="Q6GR10"/>
<dbReference type="DNASU" id="443783"/>
<dbReference type="GeneID" id="443783"/>
<dbReference type="KEGG" id="xla:443783"/>
<dbReference type="AGR" id="Xenbase:XB-GENE-483836"/>
<dbReference type="CTD" id="443783"/>
<dbReference type="Xenbase" id="XB-GENE-483836">
    <property type="gene designation" value="maea.S"/>
</dbReference>
<dbReference type="OMA" id="ANHETAR"/>
<dbReference type="OrthoDB" id="1933455at2759"/>
<dbReference type="Proteomes" id="UP000186698">
    <property type="component" value="Chromosome 1S"/>
</dbReference>
<dbReference type="Bgee" id="443783">
    <property type="expression patterns" value="Expressed in egg cell and 19 other cell types or tissues"/>
</dbReference>
<dbReference type="GO" id="GO:0005737">
    <property type="term" value="C:cytoplasm"/>
    <property type="evidence" value="ECO:0000318"/>
    <property type="project" value="GO_Central"/>
</dbReference>
<dbReference type="GO" id="GO:0005856">
    <property type="term" value="C:cytoskeleton"/>
    <property type="evidence" value="ECO:0007669"/>
    <property type="project" value="UniProtKB-SubCell"/>
</dbReference>
<dbReference type="GO" id="GO:0034657">
    <property type="term" value="C:GID complex"/>
    <property type="evidence" value="ECO:0000318"/>
    <property type="project" value="GO_Central"/>
</dbReference>
<dbReference type="GO" id="GO:0016363">
    <property type="term" value="C:nuclear matrix"/>
    <property type="evidence" value="ECO:0007669"/>
    <property type="project" value="UniProtKB-SubCell"/>
</dbReference>
<dbReference type="GO" id="GO:0005654">
    <property type="term" value="C:nucleoplasm"/>
    <property type="evidence" value="ECO:0000250"/>
    <property type="project" value="UniProtKB"/>
</dbReference>
<dbReference type="GO" id="GO:0005634">
    <property type="term" value="C:nucleus"/>
    <property type="evidence" value="ECO:0000318"/>
    <property type="project" value="GO_Central"/>
</dbReference>
<dbReference type="GO" id="GO:0005886">
    <property type="term" value="C:plasma membrane"/>
    <property type="evidence" value="ECO:0007669"/>
    <property type="project" value="UniProtKB-SubCell"/>
</dbReference>
<dbReference type="GO" id="GO:0003779">
    <property type="term" value="F:actin binding"/>
    <property type="evidence" value="ECO:0007669"/>
    <property type="project" value="UniProtKB-KW"/>
</dbReference>
<dbReference type="GO" id="GO:0061630">
    <property type="term" value="F:ubiquitin protein ligase activity"/>
    <property type="evidence" value="ECO:0007669"/>
    <property type="project" value="InterPro"/>
</dbReference>
<dbReference type="GO" id="GO:0008270">
    <property type="term" value="F:zinc ion binding"/>
    <property type="evidence" value="ECO:0007669"/>
    <property type="project" value="UniProtKB-KW"/>
</dbReference>
<dbReference type="GO" id="GO:0051301">
    <property type="term" value="P:cell division"/>
    <property type="evidence" value="ECO:0007669"/>
    <property type="project" value="UniProtKB-KW"/>
</dbReference>
<dbReference type="GO" id="GO:0043249">
    <property type="term" value="P:erythrocyte maturation"/>
    <property type="evidence" value="ECO:0007669"/>
    <property type="project" value="UniProtKB-KW"/>
</dbReference>
<dbReference type="GO" id="GO:0043161">
    <property type="term" value="P:proteasome-mediated ubiquitin-dependent protein catabolic process"/>
    <property type="evidence" value="ECO:0000318"/>
    <property type="project" value="GO_Central"/>
</dbReference>
<dbReference type="CDD" id="cd16659">
    <property type="entry name" value="RING-Ubox_Emp"/>
    <property type="match status" value="1"/>
</dbReference>
<dbReference type="InterPro" id="IPR013144">
    <property type="entry name" value="CRA_dom"/>
</dbReference>
<dbReference type="InterPro" id="IPR024964">
    <property type="entry name" value="CTLH/CRA"/>
</dbReference>
<dbReference type="InterPro" id="IPR006595">
    <property type="entry name" value="CTLH_C"/>
</dbReference>
<dbReference type="InterPro" id="IPR045098">
    <property type="entry name" value="Fyv10_fam"/>
</dbReference>
<dbReference type="InterPro" id="IPR006594">
    <property type="entry name" value="LisH"/>
</dbReference>
<dbReference type="InterPro" id="IPR044063">
    <property type="entry name" value="ZF_RING_GID"/>
</dbReference>
<dbReference type="PANTHER" id="PTHR12170:SF2">
    <property type="entry name" value="E3 UBIQUITIN-PROTEIN TRANSFERASE MAEA"/>
    <property type="match status" value="1"/>
</dbReference>
<dbReference type="PANTHER" id="PTHR12170">
    <property type="entry name" value="MACROPHAGE ERYTHROBLAST ATTACHER-RELATED"/>
    <property type="match status" value="1"/>
</dbReference>
<dbReference type="Pfam" id="PF10607">
    <property type="entry name" value="CTLH"/>
    <property type="match status" value="1"/>
</dbReference>
<dbReference type="SMART" id="SM00757">
    <property type="entry name" value="CRA"/>
    <property type="match status" value="1"/>
</dbReference>
<dbReference type="SMART" id="SM00668">
    <property type="entry name" value="CTLH"/>
    <property type="match status" value="1"/>
</dbReference>
<dbReference type="SMART" id="SM00667">
    <property type="entry name" value="LisH"/>
    <property type="match status" value="1"/>
</dbReference>
<dbReference type="SUPFAM" id="SSF57850">
    <property type="entry name" value="RING/U-box"/>
    <property type="match status" value="1"/>
</dbReference>
<dbReference type="PROSITE" id="PS50897">
    <property type="entry name" value="CTLH"/>
    <property type="match status" value="1"/>
</dbReference>
<dbReference type="PROSITE" id="PS50896">
    <property type="entry name" value="LISH"/>
    <property type="match status" value="1"/>
</dbReference>
<dbReference type="PROSITE" id="PS51867">
    <property type="entry name" value="ZF_RING_GID"/>
    <property type="match status" value="1"/>
</dbReference>
<feature type="chain" id="PRO_0000284943" description="E3 ubiquitin-protein transferase MAEA">
    <location>
        <begin position="1"/>
        <end position="396"/>
    </location>
</feature>
<feature type="domain" description="LisH" evidence="5">
    <location>
        <begin position="121"/>
        <end position="153"/>
    </location>
</feature>
<feature type="domain" description="CTLH" evidence="4">
    <location>
        <begin position="159"/>
        <end position="216"/>
    </location>
</feature>
<feature type="zinc finger region" description="RING-Gid-type" evidence="6">
    <location>
        <begin position="314"/>
        <end position="381"/>
    </location>
</feature>
<feature type="site" description="Essential for ubiquitin ligase activity" evidence="1">
    <location>
        <position position="314"/>
    </location>
</feature>
<reference key="1">
    <citation type="submission" date="2004-05" db="EMBL/GenBank/DDBJ databases">
        <authorList>
            <consortium name="NIH - Xenopus Gene Collection (XGC) project"/>
        </authorList>
    </citation>
    <scope>NUCLEOTIDE SEQUENCE [LARGE SCALE MRNA]</scope>
    <source>
        <tissue>Embryo</tissue>
    </source>
</reference>